<name>Y319_MYXXA</name>
<feature type="chain" id="PRO_0000103423" description="Uncharacterized membrane protein STKORF319">
    <location>
        <begin position="1"/>
        <end position="319"/>
    </location>
</feature>
<feature type="transmembrane region" description="Helical" evidence="1">
    <location>
        <begin position="11"/>
        <end position="31"/>
    </location>
</feature>
<feature type="transmembrane region" description="Helical" evidence="1">
    <location>
        <begin position="43"/>
        <end position="63"/>
    </location>
</feature>
<feature type="transmembrane region" description="Helical" evidence="1">
    <location>
        <begin position="83"/>
        <end position="103"/>
    </location>
</feature>
<feature type="transmembrane region" description="Helical" evidence="1">
    <location>
        <begin position="108"/>
        <end position="128"/>
    </location>
</feature>
<feature type="transmembrane region" description="Helical" evidence="1">
    <location>
        <begin position="134"/>
        <end position="154"/>
    </location>
</feature>
<feature type="transmembrane region" description="Helical" evidence="1">
    <location>
        <begin position="195"/>
        <end position="215"/>
    </location>
</feature>
<feature type="transmembrane region" description="Helical" evidence="1">
    <location>
        <begin position="220"/>
        <end position="240"/>
    </location>
</feature>
<feature type="transmembrane region" description="Helical" evidence="1">
    <location>
        <begin position="260"/>
        <end position="280"/>
    </location>
</feature>
<feature type="transmembrane region" description="Helical" evidence="1">
    <location>
        <begin position="284"/>
        <end position="304"/>
    </location>
</feature>
<keyword id="KW-1003">Cell membrane</keyword>
<keyword id="KW-0472">Membrane</keyword>
<keyword id="KW-0812">Transmembrane</keyword>
<keyword id="KW-1133">Transmembrane helix</keyword>
<dbReference type="EMBL" id="AC000101">
    <property type="protein sequence ID" value="AAB46351.1"/>
    <property type="molecule type" value="Genomic_DNA"/>
</dbReference>
<dbReference type="RefSeq" id="WP_011553509.1">
    <property type="nucleotide sequence ID" value="NZ_JABFNQ010000006.1"/>
</dbReference>
<dbReference type="GeneID" id="41360825"/>
<dbReference type="OMA" id="ADHAREY"/>
<dbReference type="GO" id="GO:0005886">
    <property type="term" value="C:plasma membrane"/>
    <property type="evidence" value="ECO:0007669"/>
    <property type="project" value="UniProtKB-SubCell"/>
</dbReference>
<dbReference type="InterPro" id="IPR005496">
    <property type="entry name" value="Integral_membrane_TerC"/>
</dbReference>
<dbReference type="InterPro" id="IPR022369">
    <property type="entry name" value="Integral_membrane_TerC_rswitch"/>
</dbReference>
<dbReference type="NCBIfam" id="TIGR03718">
    <property type="entry name" value="R_switched_Alx"/>
    <property type="match status" value="1"/>
</dbReference>
<dbReference type="PANTHER" id="PTHR30238">
    <property type="entry name" value="MEMBRANE BOUND PREDICTED REDOX MODULATOR"/>
    <property type="match status" value="1"/>
</dbReference>
<dbReference type="PANTHER" id="PTHR30238:SF0">
    <property type="entry name" value="THYLAKOID MEMBRANE PROTEIN TERC, CHLOROPLASTIC"/>
    <property type="match status" value="1"/>
</dbReference>
<dbReference type="Pfam" id="PF03741">
    <property type="entry name" value="TerC"/>
    <property type="match status" value="1"/>
</dbReference>
<sequence>METFPSVGSPGLWAGFIAFVIAMLALDLGVFHRKAHVVKFKEALGWSALWVSLALVFGAGVWWKFGPEPGLQFITGYLIEKSLSVDNIFVFVVIFSALRIPALYQHRVLFWGILSALALRAIMIFAGVAMLARFHWLIYVFGGFLIITGVKLFLQRNKEDNPEEGALMRLARRTIPSTPNFDGHHFFTVENGRKLATPLLMALLLVEASDILFALDSIPAIFAVTTDPFIVFTSNIFAILGLRSMFFMLAGAVEKFSYLKVGLSAVLVFVGTKMAIIDFVKMPPEVSLSVIAGLLGASIVASLIKSRHAPTSDADAPKV</sequence>
<proteinExistence type="inferred from homology"/>
<evidence type="ECO:0000255" key="1"/>
<evidence type="ECO:0000305" key="2"/>
<protein>
    <recommendedName>
        <fullName>Uncharacterized membrane protein STKORF319</fullName>
    </recommendedName>
</protein>
<reference key="1">
    <citation type="submission" date="1996-12" db="EMBL/GenBank/DDBJ databases">
        <title>The STK Locus of Myxococcus xanthus.</title>
        <authorList>
            <person name="Kupfer D.M."/>
            <person name="Downard J.S."/>
            <person name="Roe B.A."/>
        </authorList>
    </citation>
    <scope>NUCLEOTIDE SEQUENCE [GENOMIC DNA]</scope>
</reference>
<comment type="subcellular location">
    <subcellularLocation>
        <location evidence="2">Cell membrane</location>
        <topology evidence="2">Multi-pass membrane protein</topology>
    </subcellularLocation>
</comment>
<comment type="similarity">
    <text evidence="2">Belongs to the TerC family.</text>
</comment>
<organism>
    <name type="scientific">Myxococcus xanthus</name>
    <dbReference type="NCBI Taxonomy" id="34"/>
    <lineage>
        <taxon>Bacteria</taxon>
        <taxon>Pseudomonadati</taxon>
        <taxon>Myxococcota</taxon>
        <taxon>Myxococcia</taxon>
        <taxon>Myxococcales</taxon>
        <taxon>Cystobacterineae</taxon>
        <taxon>Myxococcaceae</taxon>
        <taxon>Myxococcus</taxon>
    </lineage>
</organism>
<accession>P96554</accession>